<organism>
    <name type="scientific">Leuconostoc citreum (strain KM20)</name>
    <dbReference type="NCBI Taxonomy" id="349519"/>
    <lineage>
        <taxon>Bacteria</taxon>
        <taxon>Bacillati</taxon>
        <taxon>Bacillota</taxon>
        <taxon>Bacilli</taxon>
        <taxon>Lactobacillales</taxon>
        <taxon>Lactobacillaceae</taxon>
        <taxon>Leuconostoc</taxon>
    </lineage>
</organism>
<gene>
    <name evidence="1" type="primary">rpmC</name>
    <name type="ordered locus">LCK_01587</name>
</gene>
<dbReference type="EMBL" id="DQ489736">
    <property type="protein sequence ID" value="ACA83410.1"/>
    <property type="molecule type" value="Genomic_DNA"/>
</dbReference>
<dbReference type="RefSeq" id="WP_002816028.1">
    <property type="nucleotide sequence ID" value="NC_010471.1"/>
</dbReference>
<dbReference type="SMR" id="B1MW06"/>
<dbReference type="STRING" id="349519.LCK_01587"/>
<dbReference type="GeneID" id="97504973"/>
<dbReference type="KEGG" id="lci:LCK_01587"/>
<dbReference type="eggNOG" id="COG0255">
    <property type="taxonomic scope" value="Bacteria"/>
</dbReference>
<dbReference type="HOGENOM" id="CLU_158491_5_2_9"/>
<dbReference type="OrthoDB" id="9815192at2"/>
<dbReference type="Proteomes" id="UP000002166">
    <property type="component" value="Chromosome"/>
</dbReference>
<dbReference type="GO" id="GO:0022625">
    <property type="term" value="C:cytosolic large ribosomal subunit"/>
    <property type="evidence" value="ECO:0007669"/>
    <property type="project" value="TreeGrafter"/>
</dbReference>
<dbReference type="GO" id="GO:0003735">
    <property type="term" value="F:structural constituent of ribosome"/>
    <property type="evidence" value="ECO:0007669"/>
    <property type="project" value="InterPro"/>
</dbReference>
<dbReference type="GO" id="GO:0006412">
    <property type="term" value="P:translation"/>
    <property type="evidence" value="ECO:0007669"/>
    <property type="project" value="UniProtKB-UniRule"/>
</dbReference>
<dbReference type="CDD" id="cd00427">
    <property type="entry name" value="Ribosomal_L29_HIP"/>
    <property type="match status" value="1"/>
</dbReference>
<dbReference type="FunFam" id="1.10.287.310:FF:000001">
    <property type="entry name" value="50S ribosomal protein L29"/>
    <property type="match status" value="1"/>
</dbReference>
<dbReference type="Gene3D" id="1.10.287.310">
    <property type="match status" value="1"/>
</dbReference>
<dbReference type="HAMAP" id="MF_00374">
    <property type="entry name" value="Ribosomal_uL29"/>
    <property type="match status" value="1"/>
</dbReference>
<dbReference type="InterPro" id="IPR050063">
    <property type="entry name" value="Ribosomal_protein_uL29"/>
</dbReference>
<dbReference type="InterPro" id="IPR001854">
    <property type="entry name" value="Ribosomal_uL29"/>
</dbReference>
<dbReference type="InterPro" id="IPR018254">
    <property type="entry name" value="Ribosomal_uL29_CS"/>
</dbReference>
<dbReference type="InterPro" id="IPR036049">
    <property type="entry name" value="Ribosomal_uL29_sf"/>
</dbReference>
<dbReference type="NCBIfam" id="TIGR00012">
    <property type="entry name" value="L29"/>
    <property type="match status" value="1"/>
</dbReference>
<dbReference type="PANTHER" id="PTHR10916">
    <property type="entry name" value="60S RIBOSOMAL PROTEIN L35/50S RIBOSOMAL PROTEIN L29"/>
    <property type="match status" value="1"/>
</dbReference>
<dbReference type="PANTHER" id="PTHR10916:SF0">
    <property type="entry name" value="LARGE RIBOSOMAL SUBUNIT PROTEIN UL29C"/>
    <property type="match status" value="1"/>
</dbReference>
<dbReference type="Pfam" id="PF00831">
    <property type="entry name" value="Ribosomal_L29"/>
    <property type="match status" value="1"/>
</dbReference>
<dbReference type="SUPFAM" id="SSF46561">
    <property type="entry name" value="Ribosomal protein L29 (L29p)"/>
    <property type="match status" value="1"/>
</dbReference>
<dbReference type="PROSITE" id="PS00579">
    <property type="entry name" value="RIBOSOMAL_L29"/>
    <property type="match status" value="1"/>
</dbReference>
<sequence>MAKASELKELSLADLQKREAEFKEELFNLRFQLATGQLENTARIAQVRKDIARVKTVIRAQELANANK</sequence>
<feature type="chain" id="PRO_1000121785" description="Large ribosomal subunit protein uL29">
    <location>
        <begin position="1"/>
        <end position="68"/>
    </location>
</feature>
<proteinExistence type="inferred from homology"/>
<comment type="similarity">
    <text evidence="1">Belongs to the universal ribosomal protein uL29 family.</text>
</comment>
<keyword id="KW-1185">Reference proteome</keyword>
<keyword id="KW-0687">Ribonucleoprotein</keyword>
<keyword id="KW-0689">Ribosomal protein</keyword>
<name>RL29_LEUCK</name>
<protein>
    <recommendedName>
        <fullName evidence="1">Large ribosomal subunit protein uL29</fullName>
    </recommendedName>
    <alternativeName>
        <fullName evidence="2">50S ribosomal protein L29</fullName>
    </alternativeName>
</protein>
<evidence type="ECO:0000255" key="1">
    <source>
        <dbReference type="HAMAP-Rule" id="MF_00374"/>
    </source>
</evidence>
<evidence type="ECO:0000305" key="2"/>
<accession>B1MW06</accession>
<reference key="1">
    <citation type="journal article" date="2008" name="J. Bacteriol.">
        <title>Complete genome sequence of Leuconostoc citreum KM20.</title>
        <authorList>
            <person name="Kim J.F."/>
            <person name="Jeong H."/>
            <person name="Lee J.-S."/>
            <person name="Choi S.-H."/>
            <person name="Ha M."/>
            <person name="Hur C.-G."/>
            <person name="Kim J.-S."/>
            <person name="Lee S."/>
            <person name="Park H.-S."/>
            <person name="Park Y.-H."/>
            <person name="Oh T.K."/>
        </authorList>
    </citation>
    <scope>NUCLEOTIDE SEQUENCE [LARGE SCALE GENOMIC DNA]</scope>
    <source>
        <strain>KM20</strain>
    </source>
</reference>